<organism>
    <name type="scientific">Bacillus phage PZA</name>
    <name type="common">Bacteriophage PZA</name>
    <dbReference type="NCBI Taxonomy" id="10757"/>
    <lineage>
        <taxon>Viruses</taxon>
        <taxon>Duplodnaviria</taxon>
        <taxon>Heunggongvirae</taxon>
        <taxon>Uroviricota</taxon>
        <taxon>Caudoviricetes</taxon>
        <taxon>Salasmaviridae</taxon>
        <taxon>Picovirinae</taxon>
        <taxon>Salasvirus</taxon>
        <taxon>Salasvirus PZA</taxon>
    </lineage>
</organism>
<reference key="1">
    <citation type="journal article" date="1986" name="Gene">
        <title>Nucleotide sequence of the right early region of Bacillus subtilis phage PZA completes the 19366-bp sequence of PZA genome. Comparison with the homologous sequence of phage phi 29.</title>
        <authorList>
            <person name="Paces V."/>
            <person name="Vlcek C."/>
            <person name="Urbanek P."/>
            <person name="Hostomsky Z."/>
        </authorList>
    </citation>
    <scope>NUCLEOTIDE SEQUENCE [GENOMIC DNA]</scope>
</reference>
<comment type="similarity">
    <text evidence="1">Belongs to the phi29likevirus gp16.9 family.</text>
</comment>
<sequence length="108" mass="12648">MSVQLNAFTFILERRGWRMVCYEQLTTNGTRILHFYLKDNPTFFATYSSQFLSDTKMIRRFASWSGQLLEGSNSVFWTNITPFEPIDEETAEDIKNLDKVVEGMNFTL</sequence>
<proteinExistence type="inferred from homology"/>
<protein>
    <recommendedName>
        <fullName>Gene product 16.9</fullName>
        <shortName>gp16.9</shortName>
    </recommendedName>
    <alternativeName>
        <fullName>Protein p16.9</fullName>
    </alternativeName>
</protein>
<keyword id="KW-0244">Early protein</keyword>
<evidence type="ECO:0000305" key="1"/>
<gene>
    <name type="primary">16.9</name>
</gene>
<name>GP169_BPPZA</name>
<organismHost>
    <name type="scientific">Bacillus subtilis</name>
    <dbReference type="NCBI Taxonomy" id="1423"/>
</organismHost>
<feature type="chain" id="PRO_0000106621" description="Gene product 16.9">
    <location>
        <begin position="1"/>
        <end position="108"/>
    </location>
</feature>
<dbReference type="EMBL" id="M11813">
    <property type="protein sequence ID" value="AAA88498.1"/>
    <property type="molecule type" value="Genomic_DNA"/>
</dbReference>
<dbReference type="PIR" id="E29004">
    <property type="entry name" value="WRBP69"/>
</dbReference>
<dbReference type="Proteomes" id="UP000000855">
    <property type="component" value="Segment"/>
</dbReference>
<accession>P68938</accession>
<accession>P08388</accession>